<comment type="function">
    <text evidence="1">As a component of the GATOR1 complex functions as an inhibitor of the amino acid-sensing branch of the mTORC1 pathway. In response to amino acid depletion, the GATOR1 complex has GTPase activating protein (GAP) activity and strongly increases GTP hydrolysis by RagA/RRAGA (or RagB/RRAGB) within heterodimeric Rag complexes, thereby turning them into their inactive GDP-bound form, releasing mTORC1 from lysosomal surface and inhibiting mTORC1 signaling. In the presence of abundant amino acids, the GATOR1 complex is negatively regulated by GATOR2, the other GATOR subcomplex, in this amino acid-sensing branch of the TORC1 pathway.</text>
</comment>
<comment type="subunit">
    <text evidence="1">Within the GATOR complex, component of the GATOR1 subcomplex, made of DEPDC5, NPRL2 and NPRL3. GATOR1 mediates the strong interaction of the GATOR complex with small GTPases Rag (RagA/RRAGA, RagB/RRAGB, RagC/RRAGC and/or RagD/RRAGD) heterodimers. GATOR1 interacts with GPR155/LYCHOS; interaction takes place in presence of cholesterol and prevents interaction between GATOR1 and KICSTOR.</text>
</comment>
<comment type="subcellular location">
    <subcellularLocation>
        <location evidence="1">Lysosome membrane</location>
    </subcellularLocation>
    <text evidence="1">Localization to lysosomes is mediated by the KICSTOR complex and is amino acid-independent.</text>
</comment>
<comment type="disruption phenotype">
    <text evidence="3">Lethality towards the end of gestation caused by a range of cardiac defects, including outflow tract abnormalities and ventricular-septal defects.</text>
</comment>
<comment type="similarity">
    <text evidence="5">Belongs to the NPR3 family.</text>
</comment>
<evidence type="ECO:0000250" key="1">
    <source>
        <dbReference type="UniProtKB" id="Q12980"/>
    </source>
</evidence>
<evidence type="ECO:0000256" key="2">
    <source>
        <dbReference type="SAM" id="MobiDB-lite"/>
    </source>
</evidence>
<evidence type="ECO:0000269" key="3">
    <source>
    </source>
</evidence>
<evidence type="ECO:0000303" key="4">
    <source>
    </source>
</evidence>
<evidence type="ECO:0000305" key="5"/>
<evidence type="ECO:0000312" key="6">
    <source>
        <dbReference type="MGI" id="MGI:109258"/>
    </source>
</evidence>
<sequence>MGDNTSPISVILVSSGSRGNKLLFRYPFQRSQEHPASQTNKPRSRYAVNNTGEHADDQDGDSRFSDVILATILATKSEMCGQKFELKIDNVRFVGHPTLLQHALGQVSKTDPSPKREAPTMILFNVVFALRANADPSVINCLHNLSRRIATVLQHEERRCQYLTREAKLILALQDEVSAMADANEGPQSPFQHILPKCKLARDLKEAYDSLCTSGVVRLHINSWLEVSFCLPHKIHYAASSLIPPEAIERSLKAIRPYHALLLLSDEKSLLSELPIDCSPALVRVIKTTSAVKNLQQLAQDADLALLQVFQLAAHLVYWGKAVIIYPLCENNVYVMSPNASVCLYSPLAEQFSRQFPSHDLPSVLAKFSLPVSLSEFRSPLAPPAQETQLIQMVVWMLQRRLLIQLHTYVCLMASPSEEEPRLREDDVPFTARVGGRSLSTPNALSFGSPTSSDDMTLTSPSMDNSSAELLPSGDSPLNKRMTENLLASLSEHERAAILNVPAAQNPEDLRMFARLLHYFRGRHHLEEIMYNENTRRSQLLMLFDKFRSVLVVTTHEDPVIAVFQALLT</sequence>
<reference key="1">
    <citation type="journal article" date="2001" name="Hum. Mol. Genet.">
        <title>Comparative genome analysis delimits a chromosomal domain and identifies key regulatory elements in the alpha globin cluster.</title>
        <authorList>
            <person name="Flint J."/>
            <person name="Tufarelli C."/>
            <person name="Peden J."/>
            <person name="Clark K."/>
            <person name="Daniels R.J."/>
            <person name="Hardison R."/>
            <person name="Miller W."/>
            <person name="Philipsen S."/>
            <person name="Tan-Un K.C."/>
            <person name="McMorrow T."/>
            <person name="Frampton J."/>
            <person name="Alter B.P."/>
            <person name="Frischauf A.-M."/>
            <person name="Higgs D.R."/>
        </authorList>
    </citation>
    <scope>NUCLEOTIDE SEQUENCE [GENOMIC DNA]</scope>
</reference>
<reference key="2">
    <citation type="journal article" date="2005" name="Science">
        <title>The transcriptional landscape of the mammalian genome.</title>
        <authorList>
            <person name="Carninci P."/>
            <person name="Kasukawa T."/>
            <person name="Katayama S."/>
            <person name="Gough J."/>
            <person name="Frith M.C."/>
            <person name="Maeda N."/>
            <person name="Oyama R."/>
            <person name="Ravasi T."/>
            <person name="Lenhard B."/>
            <person name="Wells C."/>
            <person name="Kodzius R."/>
            <person name="Shimokawa K."/>
            <person name="Bajic V.B."/>
            <person name="Brenner S.E."/>
            <person name="Batalov S."/>
            <person name="Forrest A.R."/>
            <person name="Zavolan M."/>
            <person name="Davis M.J."/>
            <person name="Wilming L.G."/>
            <person name="Aidinis V."/>
            <person name="Allen J.E."/>
            <person name="Ambesi-Impiombato A."/>
            <person name="Apweiler R."/>
            <person name="Aturaliya R.N."/>
            <person name="Bailey T.L."/>
            <person name="Bansal M."/>
            <person name="Baxter L."/>
            <person name="Beisel K.W."/>
            <person name="Bersano T."/>
            <person name="Bono H."/>
            <person name="Chalk A.M."/>
            <person name="Chiu K.P."/>
            <person name="Choudhary V."/>
            <person name="Christoffels A."/>
            <person name="Clutterbuck D.R."/>
            <person name="Crowe M.L."/>
            <person name="Dalla E."/>
            <person name="Dalrymple B.P."/>
            <person name="de Bono B."/>
            <person name="Della Gatta G."/>
            <person name="di Bernardo D."/>
            <person name="Down T."/>
            <person name="Engstrom P."/>
            <person name="Fagiolini M."/>
            <person name="Faulkner G."/>
            <person name="Fletcher C.F."/>
            <person name="Fukushima T."/>
            <person name="Furuno M."/>
            <person name="Futaki S."/>
            <person name="Gariboldi M."/>
            <person name="Georgii-Hemming P."/>
            <person name="Gingeras T.R."/>
            <person name="Gojobori T."/>
            <person name="Green R.E."/>
            <person name="Gustincich S."/>
            <person name="Harbers M."/>
            <person name="Hayashi Y."/>
            <person name="Hensch T.K."/>
            <person name="Hirokawa N."/>
            <person name="Hill D."/>
            <person name="Huminiecki L."/>
            <person name="Iacono M."/>
            <person name="Ikeo K."/>
            <person name="Iwama A."/>
            <person name="Ishikawa T."/>
            <person name="Jakt M."/>
            <person name="Kanapin A."/>
            <person name="Katoh M."/>
            <person name="Kawasawa Y."/>
            <person name="Kelso J."/>
            <person name="Kitamura H."/>
            <person name="Kitano H."/>
            <person name="Kollias G."/>
            <person name="Krishnan S.P."/>
            <person name="Kruger A."/>
            <person name="Kummerfeld S.K."/>
            <person name="Kurochkin I.V."/>
            <person name="Lareau L.F."/>
            <person name="Lazarevic D."/>
            <person name="Lipovich L."/>
            <person name="Liu J."/>
            <person name="Liuni S."/>
            <person name="McWilliam S."/>
            <person name="Madan Babu M."/>
            <person name="Madera M."/>
            <person name="Marchionni L."/>
            <person name="Matsuda H."/>
            <person name="Matsuzawa S."/>
            <person name="Miki H."/>
            <person name="Mignone F."/>
            <person name="Miyake S."/>
            <person name="Morris K."/>
            <person name="Mottagui-Tabar S."/>
            <person name="Mulder N."/>
            <person name="Nakano N."/>
            <person name="Nakauchi H."/>
            <person name="Ng P."/>
            <person name="Nilsson R."/>
            <person name="Nishiguchi S."/>
            <person name="Nishikawa S."/>
            <person name="Nori F."/>
            <person name="Ohara O."/>
            <person name="Okazaki Y."/>
            <person name="Orlando V."/>
            <person name="Pang K.C."/>
            <person name="Pavan W.J."/>
            <person name="Pavesi G."/>
            <person name="Pesole G."/>
            <person name="Petrovsky N."/>
            <person name="Piazza S."/>
            <person name="Reed J."/>
            <person name="Reid J.F."/>
            <person name="Ring B.Z."/>
            <person name="Ringwald M."/>
            <person name="Rost B."/>
            <person name="Ruan Y."/>
            <person name="Salzberg S.L."/>
            <person name="Sandelin A."/>
            <person name="Schneider C."/>
            <person name="Schoenbach C."/>
            <person name="Sekiguchi K."/>
            <person name="Semple C.A."/>
            <person name="Seno S."/>
            <person name="Sessa L."/>
            <person name="Sheng Y."/>
            <person name="Shibata Y."/>
            <person name="Shimada H."/>
            <person name="Shimada K."/>
            <person name="Silva D."/>
            <person name="Sinclair B."/>
            <person name="Sperling S."/>
            <person name="Stupka E."/>
            <person name="Sugiura K."/>
            <person name="Sultana R."/>
            <person name="Takenaka Y."/>
            <person name="Taki K."/>
            <person name="Tammoja K."/>
            <person name="Tan S.L."/>
            <person name="Tang S."/>
            <person name="Taylor M.S."/>
            <person name="Tegner J."/>
            <person name="Teichmann S.A."/>
            <person name="Ueda H.R."/>
            <person name="van Nimwegen E."/>
            <person name="Verardo R."/>
            <person name="Wei C.L."/>
            <person name="Yagi K."/>
            <person name="Yamanishi H."/>
            <person name="Zabarovsky E."/>
            <person name="Zhu S."/>
            <person name="Zimmer A."/>
            <person name="Hide W."/>
            <person name="Bult C."/>
            <person name="Grimmond S.M."/>
            <person name="Teasdale R.D."/>
            <person name="Liu E.T."/>
            <person name="Brusic V."/>
            <person name="Quackenbush J."/>
            <person name="Wahlestedt C."/>
            <person name="Mattick J.S."/>
            <person name="Hume D.A."/>
            <person name="Kai C."/>
            <person name="Sasaki D."/>
            <person name="Tomaru Y."/>
            <person name="Fukuda S."/>
            <person name="Kanamori-Katayama M."/>
            <person name="Suzuki M."/>
            <person name="Aoki J."/>
            <person name="Arakawa T."/>
            <person name="Iida J."/>
            <person name="Imamura K."/>
            <person name="Itoh M."/>
            <person name="Kato T."/>
            <person name="Kawaji H."/>
            <person name="Kawagashira N."/>
            <person name="Kawashima T."/>
            <person name="Kojima M."/>
            <person name="Kondo S."/>
            <person name="Konno H."/>
            <person name="Nakano K."/>
            <person name="Ninomiya N."/>
            <person name="Nishio T."/>
            <person name="Okada M."/>
            <person name="Plessy C."/>
            <person name="Shibata K."/>
            <person name="Shiraki T."/>
            <person name="Suzuki S."/>
            <person name="Tagami M."/>
            <person name="Waki K."/>
            <person name="Watahiki A."/>
            <person name="Okamura-Oho Y."/>
            <person name="Suzuki H."/>
            <person name="Kawai J."/>
            <person name="Hayashizaki Y."/>
        </authorList>
    </citation>
    <scope>NUCLEOTIDE SEQUENCE [LARGE SCALE MRNA]</scope>
    <source>
        <strain>C57BL/6J</strain>
        <tissue>Bone</tissue>
        <tissue>Head</tissue>
    </source>
</reference>
<reference key="3">
    <citation type="journal article" date="2004" name="Genome Res.">
        <title>The status, quality, and expansion of the NIH full-length cDNA project: the Mammalian Gene Collection (MGC).</title>
        <authorList>
            <consortium name="The MGC Project Team"/>
        </authorList>
    </citation>
    <scope>NUCLEOTIDE SEQUENCE [LARGE SCALE MRNA]</scope>
    <source>
        <tissue>Embryo</tissue>
    </source>
</reference>
<reference key="4">
    <citation type="journal article" date="2010" name="Cell">
        <title>A tissue-specific atlas of mouse protein phosphorylation and expression.</title>
        <authorList>
            <person name="Huttlin E.L."/>
            <person name="Jedrychowski M.P."/>
            <person name="Elias J.E."/>
            <person name="Goswami T."/>
            <person name="Rad R."/>
            <person name="Beausoleil S.A."/>
            <person name="Villen J."/>
            <person name="Haas W."/>
            <person name="Sowa M.E."/>
            <person name="Gygi S.P."/>
        </authorList>
    </citation>
    <scope>IDENTIFICATION BY MASS SPECTROMETRY [LARGE SCALE ANALYSIS]</scope>
    <source>
        <tissue>Testis</tissue>
    </source>
</reference>
<reference key="5">
    <citation type="journal article" date="2012" name="Mamm. Genome">
        <title>Nprl3 is required for normal development of the cardiovascular system.</title>
        <authorList>
            <person name="Kowalczyk M.S."/>
            <person name="Hughes J.R."/>
            <person name="Babbs C."/>
            <person name="Sanchez-Pulido L."/>
            <person name="Szumska D."/>
            <person name="Sharpe J.A."/>
            <person name="Sloane-Stanley J.A."/>
            <person name="Morriss-Kay G.M."/>
            <person name="Smoot L.B."/>
            <person name="Roberts A.E."/>
            <person name="Watkins H."/>
            <person name="Bhattacharya S."/>
            <person name="Gibbons R.J."/>
            <person name="Ponting C.P."/>
            <person name="Wood W.G."/>
            <person name="Higgs D.R."/>
        </authorList>
    </citation>
    <scope>DISRUPTION PHENOTYPE</scope>
</reference>
<keyword id="KW-0343">GTPase activation</keyword>
<keyword id="KW-0458">Lysosome</keyword>
<keyword id="KW-0472">Membrane</keyword>
<keyword id="KW-0597">Phosphoprotein</keyword>
<keyword id="KW-1185">Reference proteome</keyword>
<name>NPRL3_MOUSE</name>
<protein>
    <recommendedName>
        <fullName evidence="5">GATOR1 complex protein NPRL3</fullName>
    </recommendedName>
    <alternativeName>
        <fullName evidence="6">Nitrogen permease regulator 3-like protein</fullName>
    </alternativeName>
</protein>
<accession>Q8VIJ8</accession>
<feature type="chain" id="PRO_0000278089" description="GATOR1 complex protein NPRL3">
    <location>
        <begin position="1"/>
        <end position="569"/>
    </location>
</feature>
<feature type="region of interest" description="Disordered" evidence="2">
    <location>
        <begin position="27"/>
        <end position="60"/>
    </location>
</feature>
<feature type="region of interest" description="Disordered" evidence="2">
    <location>
        <begin position="441"/>
        <end position="476"/>
    </location>
</feature>
<feature type="compositionally biased region" description="Polar residues" evidence="2">
    <location>
        <begin position="34"/>
        <end position="52"/>
    </location>
</feature>
<feature type="compositionally biased region" description="Polar residues" evidence="2">
    <location>
        <begin position="441"/>
        <end position="468"/>
    </location>
</feature>
<feature type="modified residue" description="Phosphoserine" evidence="1">
    <location>
        <position position="476"/>
    </location>
</feature>
<organism>
    <name type="scientific">Mus musculus</name>
    <name type="common">Mouse</name>
    <dbReference type="NCBI Taxonomy" id="10090"/>
    <lineage>
        <taxon>Eukaryota</taxon>
        <taxon>Metazoa</taxon>
        <taxon>Chordata</taxon>
        <taxon>Craniata</taxon>
        <taxon>Vertebrata</taxon>
        <taxon>Euteleostomi</taxon>
        <taxon>Mammalia</taxon>
        <taxon>Eutheria</taxon>
        <taxon>Euarchontoglires</taxon>
        <taxon>Glires</taxon>
        <taxon>Rodentia</taxon>
        <taxon>Myomorpha</taxon>
        <taxon>Muroidea</taxon>
        <taxon>Muridae</taxon>
        <taxon>Murinae</taxon>
        <taxon>Mus</taxon>
        <taxon>Mus</taxon>
    </lineage>
</organism>
<proteinExistence type="evidence at protein level"/>
<gene>
    <name evidence="4 6" type="primary">Nprl3</name>
    <name evidence="6" type="synonym">Mare</name>
</gene>
<dbReference type="EMBL" id="AY016021">
    <property type="protein sequence ID" value="AAL32369.1"/>
    <property type="molecule type" value="Genomic_DNA"/>
</dbReference>
<dbReference type="EMBL" id="AK036405">
    <property type="protein sequence ID" value="BAC29415.1"/>
    <property type="molecule type" value="mRNA"/>
</dbReference>
<dbReference type="EMBL" id="AK081902">
    <property type="protein sequence ID" value="BAC38366.1"/>
    <property type="molecule type" value="mRNA"/>
</dbReference>
<dbReference type="EMBL" id="BC064471">
    <property type="protein sequence ID" value="AAH64471.1"/>
    <property type="molecule type" value="mRNA"/>
</dbReference>
<dbReference type="CCDS" id="CCDS24521.1"/>
<dbReference type="RefSeq" id="NP_001271288.1">
    <property type="nucleotide sequence ID" value="NM_001284359.1"/>
</dbReference>
<dbReference type="RefSeq" id="NP_001271289.1">
    <property type="nucleotide sequence ID" value="NM_001284360.1"/>
</dbReference>
<dbReference type="RefSeq" id="NP_853547.1">
    <property type="nucleotide sequence ID" value="NM_181569.3"/>
</dbReference>
<dbReference type="SMR" id="Q8VIJ8"/>
<dbReference type="FunCoup" id="Q8VIJ8">
    <property type="interactions" value="1424"/>
</dbReference>
<dbReference type="STRING" id="10090.ENSMUSP00000020530"/>
<dbReference type="GlyGen" id="Q8VIJ8">
    <property type="glycosylation" value="2 sites, 2 N-linked glycans (2 sites)"/>
</dbReference>
<dbReference type="iPTMnet" id="Q8VIJ8"/>
<dbReference type="PhosphoSitePlus" id="Q8VIJ8"/>
<dbReference type="PaxDb" id="10090-ENSMUSP00000020530"/>
<dbReference type="ProteomicsDB" id="295515"/>
<dbReference type="Pumba" id="Q8VIJ8"/>
<dbReference type="Antibodypedia" id="1565">
    <property type="antibodies" value="77 antibodies from 26 providers"/>
</dbReference>
<dbReference type="DNASU" id="17168"/>
<dbReference type="Ensembl" id="ENSMUST00000020530.12">
    <property type="protein sequence ID" value="ENSMUSP00000020530.6"/>
    <property type="gene ID" value="ENSMUSG00000020289.16"/>
</dbReference>
<dbReference type="GeneID" id="17168"/>
<dbReference type="KEGG" id="mmu:17168"/>
<dbReference type="UCSC" id="uc007ijc.2">
    <property type="organism name" value="mouse"/>
</dbReference>
<dbReference type="AGR" id="MGI:109258"/>
<dbReference type="CTD" id="8131"/>
<dbReference type="MGI" id="MGI:109258">
    <property type="gene designation" value="Nprl3"/>
</dbReference>
<dbReference type="VEuPathDB" id="HostDB:ENSMUSG00000020289"/>
<dbReference type="eggNOG" id="KOG3830">
    <property type="taxonomic scope" value="Eukaryota"/>
</dbReference>
<dbReference type="GeneTree" id="ENSGT00390000015916"/>
<dbReference type="HOGENOM" id="CLU_014030_1_0_1"/>
<dbReference type="InParanoid" id="Q8VIJ8"/>
<dbReference type="OMA" id="CNLAFRY"/>
<dbReference type="OrthoDB" id="18648at2759"/>
<dbReference type="PhylomeDB" id="Q8VIJ8"/>
<dbReference type="TreeFam" id="TF105965"/>
<dbReference type="Reactome" id="R-MMU-9639288">
    <property type="pathway name" value="Amino acids regulate mTORC1"/>
</dbReference>
<dbReference type="BioGRID-ORCS" id="17168">
    <property type="hits" value="8 hits in 79 CRISPR screens"/>
</dbReference>
<dbReference type="ChiTaRS" id="Nprl3">
    <property type="organism name" value="mouse"/>
</dbReference>
<dbReference type="PRO" id="PR:Q8VIJ8"/>
<dbReference type="Proteomes" id="UP000000589">
    <property type="component" value="Chromosome 11"/>
</dbReference>
<dbReference type="RNAct" id="Q8VIJ8">
    <property type="molecule type" value="protein"/>
</dbReference>
<dbReference type="Bgee" id="ENSMUSG00000020289">
    <property type="expression patterns" value="Expressed in hindlimb stylopod muscle and 159 other cell types or tissues"/>
</dbReference>
<dbReference type="ExpressionAtlas" id="Q8VIJ8">
    <property type="expression patterns" value="baseline and differential"/>
</dbReference>
<dbReference type="GO" id="GO:1990130">
    <property type="term" value="C:GATOR1 complex"/>
    <property type="evidence" value="ECO:0000250"/>
    <property type="project" value="UniProtKB"/>
</dbReference>
<dbReference type="GO" id="GO:0005765">
    <property type="term" value="C:lysosomal membrane"/>
    <property type="evidence" value="ECO:0000250"/>
    <property type="project" value="UniProtKB"/>
</dbReference>
<dbReference type="GO" id="GO:0005096">
    <property type="term" value="F:GTPase activator activity"/>
    <property type="evidence" value="ECO:0007669"/>
    <property type="project" value="UniProtKB-KW"/>
</dbReference>
<dbReference type="GO" id="GO:0035909">
    <property type="term" value="P:aorta morphogenesis"/>
    <property type="evidence" value="ECO:0000315"/>
    <property type="project" value="MGI"/>
</dbReference>
<dbReference type="GO" id="GO:0048738">
    <property type="term" value="P:cardiac muscle tissue development"/>
    <property type="evidence" value="ECO:0000315"/>
    <property type="project" value="MGI"/>
</dbReference>
<dbReference type="GO" id="GO:0034198">
    <property type="term" value="P:cellular response to amino acid starvation"/>
    <property type="evidence" value="ECO:0000250"/>
    <property type="project" value="UniProtKB"/>
</dbReference>
<dbReference type="GO" id="GO:1904262">
    <property type="term" value="P:negative regulation of TORC1 signaling"/>
    <property type="evidence" value="ECO:0000250"/>
    <property type="project" value="UniProtKB"/>
</dbReference>
<dbReference type="GO" id="GO:0060021">
    <property type="term" value="P:roof of mouth development"/>
    <property type="evidence" value="ECO:0000315"/>
    <property type="project" value="MGI"/>
</dbReference>
<dbReference type="GO" id="GO:0003281">
    <property type="term" value="P:ventricular septum development"/>
    <property type="evidence" value="ECO:0000315"/>
    <property type="project" value="MGI"/>
</dbReference>
<dbReference type="InterPro" id="IPR008979">
    <property type="entry name" value="Galactose-bd-like_sf"/>
</dbReference>
<dbReference type="InterPro" id="IPR056603">
    <property type="entry name" value="HTH_NPRL3"/>
</dbReference>
<dbReference type="InterPro" id="IPR005365">
    <property type="entry name" value="Npr3"/>
</dbReference>
<dbReference type="PANTHER" id="PTHR13153">
    <property type="entry name" value="CGTHBA PROTEIN -14 GENE PROTEIN"/>
    <property type="match status" value="1"/>
</dbReference>
<dbReference type="PANTHER" id="PTHR13153:SF5">
    <property type="entry name" value="GATOR COMPLEX PROTEIN NPRL3"/>
    <property type="match status" value="1"/>
</dbReference>
<dbReference type="Pfam" id="PF24064">
    <property type="entry name" value="HTH_NPRL3"/>
    <property type="match status" value="1"/>
</dbReference>
<dbReference type="Pfam" id="PF03666">
    <property type="entry name" value="NPR3"/>
    <property type="match status" value="2"/>
</dbReference>
<dbReference type="SUPFAM" id="SSF49785">
    <property type="entry name" value="Galactose-binding domain-like"/>
    <property type="match status" value="1"/>
</dbReference>